<reference key="1">
    <citation type="journal article" date="1999" name="Mol. Biol. Cell">
        <title>Disruption of a dynamin homologue affects endocytosis, organelle morphology, and cytokinesis in Dictyostelium discoideum.</title>
        <authorList>
            <person name="Wienke D.C."/>
            <person name="Knetsch M.L."/>
            <person name="Neuhaus E.M."/>
            <person name="Reedy M.C."/>
            <person name="Manstein D.J."/>
        </authorList>
    </citation>
    <scope>NUCLEOTIDE SEQUENCE [MRNA]</scope>
    <scope>FUNCTION</scope>
    <scope>SUBCELLULAR LOCATION</scope>
    <scope>DEVELOPMENTAL STAGE</scope>
    <source>
        <strain>AX2</strain>
    </source>
</reference>
<reference key="2">
    <citation type="journal article" date="2005" name="Nature">
        <title>The genome of the social amoeba Dictyostelium discoideum.</title>
        <authorList>
            <person name="Eichinger L."/>
            <person name="Pachebat J.A."/>
            <person name="Gloeckner G."/>
            <person name="Rajandream M.A."/>
            <person name="Sucgang R."/>
            <person name="Berriman M."/>
            <person name="Song J."/>
            <person name="Olsen R."/>
            <person name="Szafranski K."/>
            <person name="Xu Q."/>
            <person name="Tunggal B."/>
            <person name="Kummerfeld S."/>
            <person name="Madera M."/>
            <person name="Konfortov B.A."/>
            <person name="Rivero F."/>
            <person name="Bankier A.T."/>
            <person name="Lehmann R."/>
            <person name="Hamlin N."/>
            <person name="Davies R."/>
            <person name="Gaudet P."/>
            <person name="Fey P."/>
            <person name="Pilcher K."/>
            <person name="Chen G."/>
            <person name="Saunders D."/>
            <person name="Sodergren E.J."/>
            <person name="Davis P."/>
            <person name="Kerhornou A."/>
            <person name="Nie X."/>
            <person name="Hall N."/>
            <person name="Anjard C."/>
            <person name="Hemphill L."/>
            <person name="Bason N."/>
            <person name="Farbrother P."/>
            <person name="Desany B."/>
            <person name="Just E."/>
            <person name="Morio T."/>
            <person name="Rost R."/>
            <person name="Churcher C.M."/>
            <person name="Cooper J."/>
            <person name="Haydock S."/>
            <person name="van Driessche N."/>
            <person name="Cronin A."/>
            <person name="Goodhead I."/>
            <person name="Muzny D.M."/>
            <person name="Mourier T."/>
            <person name="Pain A."/>
            <person name="Lu M."/>
            <person name="Harper D."/>
            <person name="Lindsay R."/>
            <person name="Hauser H."/>
            <person name="James K.D."/>
            <person name="Quiles M."/>
            <person name="Madan Babu M."/>
            <person name="Saito T."/>
            <person name="Buchrieser C."/>
            <person name="Wardroper A."/>
            <person name="Felder M."/>
            <person name="Thangavelu M."/>
            <person name="Johnson D."/>
            <person name="Knights A."/>
            <person name="Loulseged H."/>
            <person name="Mungall K.L."/>
            <person name="Oliver K."/>
            <person name="Price C."/>
            <person name="Quail M.A."/>
            <person name="Urushihara H."/>
            <person name="Hernandez J."/>
            <person name="Rabbinowitsch E."/>
            <person name="Steffen D."/>
            <person name="Sanders M."/>
            <person name="Ma J."/>
            <person name="Kohara Y."/>
            <person name="Sharp S."/>
            <person name="Simmonds M.N."/>
            <person name="Spiegler S."/>
            <person name="Tivey A."/>
            <person name="Sugano S."/>
            <person name="White B."/>
            <person name="Walker D."/>
            <person name="Woodward J.R."/>
            <person name="Winckler T."/>
            <person name="Tanaka Y."/>
            <person name="Shaulsky G."/>
            <person name="Schleicher M."/>
            <person name="Weinstock G.M."/>
            <person name="Rosenthal A."/>
            <person name="Cox E.C."/>
            <person name="Chisholm R.L."/>
            <person name="Gibbs R.A."/>
            <person name="Loomis W.F."/>
            <person name="Platzer M."/>
            <person name="Kay R.R."/>
            <person name="Williams J.G."/>
            <person name="Dear P.H."/>
            <person name="Noegel A.A."/>
            <person name="Barrell B.G."/>
            <person name="Kuspa A."/>
        </authorList>
    </citation>
    <scope>NUCLEOTIDE SEQUENCE [LARGE SCALE GENOMIC DNA]</scope>
    <source>
        <strain>AX4</strain>
    </source>
</reference>
<reference key="3">
    <citation type="journal article" date="2006" name="Eur. J. Cell Biol.">
        <title>Identification and isolation of Dictyostelium microtubule-associated protein interactors by tandem affinity purification.</title>
        <authorList>
            <person name="Koch K.V."/>
            <person name="Reinders Y."/>
            <person name="Ho T.-H."/>
            <person name="Sickmann A."/>
            <person name="Graef R."/>
        </authorList>
    </citation>
    <scope>IDENTIFICATION BY MASS SPECTROMETRY [LARGE SCALE ANALYSIS]</scope>
    <source>
        <strain>AX2</strain>
    </source>
</reference>
<reference key="4">
    <citation type="journal article" date="2006" name="Mol. Cell. Proteomics">
        <title>Proteomics fingerprinting of phagosome maturation and evidence for the role of a Galpha during uptake.</title>
        <authorList>
            <person name="Gotthardt D."/>
            <person name="Blancheteau V."/>
            <person name="Bosserhoff A."/>
            <person name="Ruppert T."/>
            <person name="Delorenzi M."/>
            <person name="Soldati T."/>
        </authorList>
    </citation>
    <scope>IDENTIFICATION BY MASS SPECTROMETRY [LARGE SCALE ANALYSIS]</scope>
    <source>
        <strain>AX2</strain>
    </source>
</reference>
<reference key="5">
    <citation type="journal article" date="2001" name="EMBO J.">
        <title>Crystal structure of a dynamin GTPase domain in both nucleotide-free and GDP-bound forms.</title>
        <authorList>
            <person name="Niemann H.H."/>
            <person name="Knetsch M.L."/>
            <person name="Scherer A."/>
            <person name="Manstein D.J."/>
            <person name="Kull F.J."/>
        </authorList>
    </citation>
    <scope>X-RAY CRYSTALLOGRAPHY (2.3 ANGSTROMS) OF 2-316</scope>
</reference>
<organism>
    <name type="scientific">Dictyostelium discoideum</name>
    <name type="common">Social amoeba</name>
    <dbReference type="NCBI Taxonomy" id="44689"/>
    <lineage>
        <taxon>Eukaryota</taxon>
        <taxon>Amoebozoa</taxon>
        <taxon>Evosea</taxon>
        <taxon>Eumycetozoa</taxon>
        <taxon>Dictyostelia</taxon>
        <taxon>Dictyosteliales</taxon>
        <taxon>Dictyosteliaceae</taxon>
        <taxon>Dictyostelium</taxon>
    </lineage>
</organism>
<evidence type="ECO:0000250" key="1">
    <source>
        <dbReference type="UniProtKB" id="O00429"/>
    </source>
</evidence>
<evidence type="ECO:0000255" key="2">
    <source>
        <dbReference type="PROSITE-ProRule" id="PRU00720"/>
    </source>
</evidence>
<evidence type="ECO:0000255" key="3">
    <source>
        <dbReference type="PROSITE-ProRule" id="PRU01055"/>
    </source>
</evidence>
<evidence type="ECO:0000256" key="4">
    <source>
        <dbReference type="SAM" id="MobiDB-lite"/>
    </source>
</evidence>
<evidence type="ECO:0000269" key="5">
    <source>
    </source>
</evidence>
<evidence type="ECO:0007829" key="6">
    <source>
        <dbReference type="PDB" id="1JWY"/>
    </source>
</evidence>
<evidence type="ECO:0007829" key="7">
    <source>
        <dbReference type="PDB" id="1JX2"/>
    </source>
</evidence>
<protein>
    <recommendedName>
        <fullName>Dynamin-A</fullName>
    </recommendedName>
</protein>
<keyword id="KW-0002">3D-structure</keyword>
<keyword id="KW-0963">Cytoplasm</keyword>
<keyword id="KW-0342">GTP-binding</keyword>
<keyword id="KW-0378">Hydrolase</keyword>
<keyword id="KW-0505">Motor protein</keyword>
<keyword id="KW-0547">Nucleotide-binding</keyword>
<keyword id="KW-1185">Reference proteome</keyword>
<comment type="function">
    <text evidence="5">Function in membrane trafficking processes along the endo-lysosomal pathway.</text>
</comment>
<comment type="subcellular location">
    <subcellularLocation>
        <location evidence="5">Cytoplasm</location>
    </subcellularLocation>
    <text>Found in association with endosomal and postlysosomal vacuoles.</text>
</comment>
<comment type="developmental stage">
    <text evidence="5">Present during all stages of development.</text>
</comment>
<comment type="similarity">
    <text evidence="3">Belongs to the TRAFAC class dynamin-like GTPase superfamily. Dynamin/Fzo/YdjA family.</text>
</comment>
<feature type="chain" id="PRO_0000312856" description="Dynamin-A">
    <location>
        <begin position="1"/>
        <end position="853"/>
    </location>
</feature>
<feature type="domain" description="Dynamin-type G" evidence="3">
    <location>
        <begin position="22"/>
        <end position="296"/>
    </location>
</feature>
<feature type="domain" description="GED" evidence="2">
    <location>
        <begin position="762"/>
        <end position="853"/>
    </location>
</feature>
<feature type="region of interest" description="G1 motif" evidence="3">
    <location>
        <begin position="32"/>
        <end position="39"/>
    </location>
</feature>
<feature type="region of interest" description="G2 motif" evidence="3">
    <location>
        <begin position="58"/>
        <end position="60"/>
    </location>
</feature>
<feature type="region of interest" description="G3 motif" evidence="3">
    <location>
        <begin position="138"/>
        <end position="141"/>
    </location>
</feature>
<feature type="region of interest" description="G4 motif" evidence="3">
    <location>
        <begin position="207"/>
        <end position="210"/>
    </location>
</feature>
<feature type="region of interest" description="G5 motif" evidence="3">
    <location>
        <begin position="237"/>
        <end position="240"/>
    </location>
</feature>
<feature type="region of interest" description="Disordered" evidence="4">
    <location>
        <begin position="523"/>
        <end position="738"/>
    </location>
</feature>
<feature type="compositionally biased region" description="Low complexity" evidence="4">
    <location>
        <begin position="523"/>
        <end position="569"/>
    </location>
</feature>
<feature type="compositionally biased region" description="Low complexity" evidence="4">
    <location>
        <begin position="590"/>
        <end position="607"/>
    </location>
</feature>
<feature type="compositionally biased region" description="Polar residues" evidence="4">
    <location>
        <begin position="610"/>
        <end position="624"/>
    </location>
</feature>
<feature type="compositionally biased region" description="Low complexity" evidence="4">
    <location>
        <begin position="625"/>
        <end position="635"/>
    </location>
</feature>
<feature type="compositionally biased region" description="Low complexity" evidence="4">
    <location>
        <begin position="664"/>
        <end position="728"/>
    </location>
</feature>
<feature type="binding site" evidence="1">
    <location>
        <begin position="32"/>
        <end position="40"/>
    </location>
    <ligand>
        <name>GTP</name>
        <dbReference type="ChEBI" id="CHEBI:37565"/>
    </ligand>
</feature>
<feature type="binding site" evidence="1">
    <location>
        <begin position="207"/>
        <end position="213"/>
    </location>
    <ligand>
        <name>GTP</name>
        <dbReference type="ChEBI" id="CHEBI:37565"/>
    </ligand>
</feature>
<feature type="binding site" evidence="1">
    <location>
        <begin position="238"/>
        <end position="241"/>
    </location>
    <ligand>
        <name>GTP</name>
        <dbReference type="ChEBI" id="CHEBI:37565"/>
    </ligand>
</feature>
<feature type="helix" evidence="6">
    <location>
        <begin position="4"/>
        <end position="14"/>
    </location>
</feature>
<feature type="turn" evidence="6">
    <location>
        <begin position="15"/>
        <end position="17"/>
    </location>
</feature>
<feature type="strand" evidence="6">
    <location>
        <begin position="18"/>
        <end position="20"/>
    </location>
</feature>
<feature type="strand" evidence="6">
    <location>
        <begin position="27"/>
        <end position="32"/>
    </location>
</feature>
<feature type="strand" evidence="6">
    <location>
        <begin position="34"/>
        <end position="37"/>
    </location>
</feature>
<feature type="helix" evidence="6">
    <location>
        <begin position="38"/>
        <end position="46"/>
    </location>
</feature>
<feature type="strand" evidence="6">
    <location>
        <begin position="63"/>
        <end position="69"/>
    </location>
</feature>
<feature type="strand" evidence="6">
    <location>
        <begin position="82"/>
        <end position="88"/>
    </location>
</feature>
<feature type="helix" evidence="6">
    <location>
        <begin position="97"/>
        <end position="106"/>
    </location>
</feature>
<feature type="strand" evidence="6">
    <location>
        <begin position="122"/>
        <end position="128"/>
    </location>
</feature>
<feature type="strand" evidence="6">
    <location>
        <begin position="133"/>
        <end position="138"/>
    </location>
</feature>
<feature type="helix" evidence="6">
    <location>
        <begin position="155"/>
        <end position="167"/>
    </location>
</feature>
<feature type="strand" evidence="6">
    <location>
        <begin position="171"/>
        <end position="181"/>
    </location>
</feature>
<feature type="helix" evidence="6">
    <location>
        <begin position="188"/>
        <end position="195"/>
    </location>
</feature>
<feature type="strand" evidence="6">
    <location>
        <begin position="200"/>
        <end position="207"/>
    </location>
</feature>
<feature type="helix" evidence="7">
    <location>
        <begin position="209"/>
        <end position="211"/>
    </location>
</feature>
<feature type="helix" evidence="6">
    <location>
        <begin position="219"/>
        <end position="222"/>
    </location>
</feature>
<feature type="strand" evidence="6">
    <location>
        <begin position="225"/>
        <end position="227"/>
    </location>
</feature>
<feature type="strand" evidence="6">
    <location>
        <begin position="233"/>
        <end position="235"/>
    </location>
</feature>
<feature type="helix" evidence="6">
    <location>
        <begin position="241"/>
        <end position="244"/>
    </location>
</feature>
<feature type="strand" evidence="6">
    <location>
        <begin position="245"/>
        <end position="247"/>
    </location>
</feature>
<feature type="helix" evidence="6">
    <location>
        <begin position="250"/>
        <end position="262"/>
    </location>
</feature>
<feature type="helix" evidence="6">
    <location>
        <begin position="267"/>
        <end position="269"/>
    </location>
</feature>
<feature type="helix" evidence="6">
    <location>
        <begin position="271"/>
        <end position="273"/>
    </location>
</feature>
<feature type="helix" evidence="6">
    <location>
        <begin position="276"/>
        <end position="305"/>
    </location>
</feature>
<sequence>MDQLIPVINKLQDVFNTLGSDPLDLPQIVVVGSQSSGKSSVLENIVGRDFLPRGSGIVTRRPLILQLTHLPIADDGSQTQEWGEFLHKPNDMFYDFSEIREEIIRDTDRMTGKNKGISAQPINLKIYSPHVVNLTLVDLPGITKVPVGDQPTDIEQQIRRMVMAYIKKQNAIIVAVTPANTDLANSDALQLAKEVDPEGKRTIGVITKLDLMDKGTDAMEVLTGRVIPLTLGFIGVINRSQEDIIAKKSIRESLKSEILYFKNHPIYKSIANRSGTAYLSKTLNKLLMFHIRDTLPDLKVKVSKMLSDVQGELSTYGDPLYDTKNSQGALLLQIITIFSSNFKDAIDGKLTDLSNNELYGGARISYIFNEIYSHCVNNIDPLEGISLNDIRTTMRNATGPRAALFIPEISFELLVKKQVVRLEEPSAQCVEYVYDELQRIVSQLEAKELSRFINLKARVIEVVNNLLQKHKVPTKTMIEHLIKIETAFINTSHPDFVGGEGIFESLYKKQQLQQQNHLQQLQDQYQQQQQQQQQQQQQNGINNNQKGDNGNMNVNQQNMNQQNMNQQNQSTNPFLQQQQQGQNKYPGGPPAQQQPNQQPNQLNKGPQNMPPNQSKPSSIPQNGPNNNNNNNNNNNRQDHQQGSFFSSFFRASPDPSLGQYGGANNSNNSNNPTSPINSSSNSGNNYNTFGGQQSSSSSSQQLQQSSQSQYKTSYNNNNNSSSNNSSYNRYQDDFYGRGDKLNQVPSIIKAPDDLTSKEKFETELIRELLISYFNIVKKNVKDSVPKSIMHFLVNQSKEHIQNELVAALYKEELFDELLEESPQISSKRKSCKAMIEILRKANEIINEIRDFRN</sequence>
<name>DYNA_DICDI</name>
<accession>Q94464</accession>
<accession>Q54YU0</accession>
<gene>
    <name type="primary">dymA</name>
    <name type="ORF">DDB_G0277849</name>
</gene>
<proteinExistence type="evidence at protein level"/>
<dbReference type="EMBL" id="X99669">
    <property type="protein sequence ID" value="CAA67983.1"/>
    <property type="molecule type" value="mRNA"/>
</dbReference>
<dbReference type="EMBL" id="AAFI02000023">
    <property type="protein sequence ID" value="EAL68097.1"/>
    <property type="molecule type" value="Genomic_DNA"/>
</dbReference>
<dbReference type="RefSeq" id="XP_642112.1">
    <property type="nucleotide sequence ID" value="XM_637020.1"/>
</dbReference>
<dbReference type="PDB" id="1JWY">
    <property type="method" value="X-ray"/>
    <property type="resolution" value="2.30 A"/>
    <property type="chains" value="B=2-316"/>
</dbReference>
<dbReference type="PDB" id="1JX2">
    <property type="method" value="X-ray"/>
    <property type="resolution" value="2.30 A"/>
    <property type="chains" value="B=2-316"/>
</dbReference>
<dbReference type="PDBsum" id="1JWY"/>
<dbReference type="PDBsum" id="1JX2"/>
<dbReference type="SMR" id="Q94464"/>
<dbReference type="FunCoup" id="Q94464">
    <property type="interactions" value="1231"/>
</dbReference>
<dbReference type="STRING" id="44689.Q94464"/>
<dbReference type="GlyGen" id="Q94464">
    <property type="glycosylation" value="1 site"/>
</dbReference>
<dbReference type="PaxDb" id="44689-DDB0216177"/>
<dbReference type="EnsemblProtists" id="EAL68097">
    <property type="protein sequence ID" value="EAL68097"/>
    <property type="gene ID" value="DDB_G0277849"/>
</dbReference>
<dbReference type="GeneID" id="8621323"/>
<dbReference type="KEGG" id="ddi:DDB_G0277849"/>
<dbReference type="dictyBase" id="DDB_G0277849">
    <property type="gene designation" value="dymA"/>
</dbReference>
<dbReference type="VEuPathDB" id="AmoebaDB:DDB_G0277849"/>
<dbReference type="eggNOG" id="KOG0446">
    <property type="taxonomic scope" value="Eukaryota"/>
</dbReference>
<dbReference type="HOGENOM" id="CLU_008964_5_0_1"/>
<dbReference type="InParanoid" id="Q94464"/>
<dbReference type="OMA" id="XVLLLID"/>
<dbReference type="PhylomeDB" id="Q94464"/>
<dbReference type="Reactome" id="R-DDI-1169408">
    <property type="pathway name" value="ISG15 antiviral mechanism"/>
</dbReference>
<dbReference type="Reactome" id="R-DDI-169911">
    <property type="pathway name" value="Regulation of Apoptosis"/>
</dbReference>
<dbReference type="Reactome" id="R-DDI-75153">
    <property type="pathway name" value="Apoptotic execution phase"/>
</dbReference>
<dbReference type="EvolutionaryTrace" id="Q94464"/>
<dbReference type="PRO" id="PR:Q94464"/>
<dbReference type="Proteomes" id="UP000002195">
    <property type="component" value="Chromosome 3"/>
</dbReference>
<dbReference type="GO" id="GO:0032154">
    <property type="term" value="C:cleavage furrow"/>
    <property type="evidence" value="ECO:0000314"/>
    <property type="project" value="dictyBase"/>
</dbReference>
<dbReference type="GO" id="GO:0005737">
    <property type="term" value="C:cytoplasm"/>
    <property type="evidence" value="ECO:0000314"/>
    <property type="project" value="dictyBase"/>
</dbReference>
<dbReference type="GO" id="GO:0045171">
    <property type="term" value="C:intercellular bridge"/>
    <property type="evidence" value="ECO:0000314"/>
    <property type="project" value="dictyBase"/>
</dbReference>
<dbReference type="GO" id="GO:0016020">
    <property type="term" value="C:membrane"/>
    <property type="evidence" value="ECO:0000318"/>
    <property type="project" value="GO_Central"/>
</dbReference>
<dbReference type="GO" id="GO:0005874">
    <property type="term" value="C:microtubule"/>
    <property type="evidence" value="ECO:0000318"/>
    <property type="project" value="GO_Central"/>
</dbReference>
<dbReference type="GO" id="GO:0097204">
    <property type="term" value="C:phagocytic cup base"/>
    <property type="evidence" value="ECO:0000314"/>
    <property type="project" value="dictyBase"/>
</dbReference>
<dbReference type="GO" id="GO:0045335">
    <property type="term" value="C:phagocytic vesicle"/>
    <property type="evidence" value="ECO:0000314"/>
    <property type="project" value="dictyBase"/>
</dbReference>
<dbReference type="GO" id="GO:0005525">
    <property type="term" value="F:GTP binding"/>
    <property type="evidence" value="ECO:0000314"/>
    <property type="project" value="dictyBase"/>
</dbReference>
<dbReference type="GO" id="GO:0003924">
    <property type="term" value="F:GTPase activity"/>
    <property type="evidence" value="ECO:0000314"/>
    <property type="project" value="dictyBase"/>
</dbReference>
<dbReference type="GO" id="GO:0042802">
    <property type="term" value="F:identical protein binding"/>
    <property type="evidence" value="ECO:0000314"/>
    <property type="project" value="dictyBase"/>
</dbReference>
<dbReference type="GO" id="GO:0008017">
    <property type="term" value="F:microtubule binding"/>
    <property type="evidence" value="ECO:0000318"/>
    <property type="project" value="GO_Central"/>
</dbReference>
<dbReference type="GO" id="GO:0005543">
    <property type="term" value="F:phospholipid binding"/>
    <property type="evidence" value="ECO:0000314"/>
    <property type="project" value="dictyBase"/>
</dbReference>
<dbReference type="GO" id="GO:0005522">
    <property type="term" value="F:profilin binding"/>
    <property type="evidence" value="ECO:0000353"/>
    <property type="project" value="dictyBase"/>
</dbReference>
<dbReference type="GO" id="GO:0007015">
    <property type="term" value="P:actin filament organization"/>
    <property type="evidence" value="ECO:0000315"/>
    <property type="project" value="dictyBase"/>
</dbReference>
<dbReference type="GO" id="GO:0007032">
    <property type="term" value="P:endosome organization"/>
    <property type="evidence" value="ECO:0000315"/>
    <property type="project" value="dictyBase"/>
</dbReference>
<dbReference type="GO" id="GO:0007163">
    <property type="term" value="P:establishment or maintenance of cell polarity"/>
    <property type="evidence" value="ECO:0000315"/>
    <property type="project" value="dictyBase"/>
</dbReference>
<dbReference type="GO" id="GO:0048312">
    <property type="term" value="P:intracellular distribution of mitochondria"/>
    <property type="evidence" value="ECO:0000315"/>
    <property type="project" value="dictyBase"/>
</dbReference>
<dbReference type="GO" id="GO:0061952">
    <property type="term" value="P:midbody abscission"/>
    <property type="evidence" value="ECO:0000315"/>
    <property type="project" value="dictyBase"/>
</dbReference>
<dbReference type="GO" id="GO:0000266">
    <property type="term" value="P:mitochondrial fission"/>
    <property type="evidence" value="ECO:0000318"/>
    <property type="project" value="GO_Central"/>
</dbReference>
<dbReference type="GO" id="GO:0007005">
    <property type="term" value="P:mitochondrion organization"/>
    <property type="evidence" value="ECO:0000315"/>
    <property type="project" value="dictyBase"/>
</dbReference>
<dbReference type="GO" id="GO:0006997">
    <property type="term" value="P:nucleus organization"/>
    <property type="evidence" value="ECO:0000315"/>
    <property type="project" value="dictyBase"/>
</dbReference>
<dbReference type="GO" id="GO:0016559">
    <property type="term" value="P:peroxisome fission"/>
    <property type="evidence" value="ECO:0000318"/>
    <property type="project" value="GO_Central"/>
</dbReference>
<dbReference type="GO" id="GO:0006909">
    <property type="term" value="P:phagocytosis"/>
    <property type="evidence" value="ECO:0000315"/>
    <property type="project" value="dictyBase"/>
</dbReference>
<dbReference type="GO" id="GO:0090383">
    <property type="term" value="P:phagosome acidification"/>
    <property type="evidence" value="ECO:0000315"/>
    <property type="project" value="dictyBase"/>
</dbReference>
<dbReference type="GO" id="GO:0006907">
    <property type="term" value="P:pinocytosis"/>
    <property type="evidence" value="ECO:0000315"/>
    <property type="project" value="dictyBase"/>
</dbReference>
<dbReference type="GO" id="GO:1905345">
    <property type="term" value="P:protein localization to cleavage furrow"/>
    <property type="evidence" value="ECO:0000315"/>
    <property type="project" value="dictyBase"/>
</dbReference>
<dbReference type="GO" id="GO:1900756">
    <property type="term" value="P:protein processing in phagocytic vesicle"/>
    <property type="evidence" value="ECO:0000315"/>
    <property type="project" value="dictyBase"/>
</dbReference>
<dbReference type="GO" id="GO:0044656">
    <property type="term" value="P:regulation of post-lysosomal vacuole size"/>
    <property type="evidence" value="ECO:0000315"/>
    <property type="project" value="dictyBase"/>
</dbReference>
<dbReference type="GO" id="GO:0009617">
    <property type="term" value="P:response to bacterium"/>
    <property type="evidence" value="ECO:0007007"/>
    <property type="project" value="dictyBase"/>
</dbReference>
<dbReference type="GO" id="GO:0031288">
    <property type="term" value="P:sorocarp morphogenesis"/>
    <property type="evidence" value="ECO:0000315"/>
    <property type="project" value="dictyBase"/>
</dbReference>
<dbReference type="CDD" id="cd08771">
    <property type="entry name" value="DLP_1"/>
    <property type="match status" value="1"/>
</dbReference>
<dbReference type="FunFam" id="1.20.120.1240:FF:000055">
    <property type="entry name" value="Dynamin-A"/>
    <property type="match status" value="1"/>
</dbReference>
<dbReference type="FunFam" id="3.40.50.300:FF:000383">
    <property type="entry name" value="Dynamin-like gtpase dnm1"/>
    <property type="match status" value="1"/>
</dbReference>
<dbReference type="Gene3D" id="1.20.120.1240">
    <property type="entry name" value="Dynamin, middle domain"/>
    <property type="match status" value="2"/>
</dbReference>
<dbReference type="Gene3D" id="3.40.50.300">
    <property type="entry name" value="P-loop containing nucleotide triphosphate hydrolases"/>
    <property type="match status" value="1"/>
</dbReference>
<dbReference type="InterPro" id="IPR022812">
    <property type="entry name" value="Dynamin"/>
</dbReference>
<dbReference type="InterPro" id="IPR001401">
    <property type="entry name" value="Dynamin_GTPase"/>
</dbReference>
<dbReference type="InterPro" id="IPR019762">
    <property type="entry name" value="Dynamin_GTPase_CS"/>
</dbReference>
<dbReference type="InterPro" id="IPR045063">
    <property type="entry name" value="Dynamin_N"/>
</dbReference>
<dbReference type="InterPro" id="IPR000375">
    <property type="entry name" value="Dynamin_stalk"/>
</dbReference>
<dbReference type="InterPro" id="IPR030381">
    <property type="entry name" value="G_DYNAMIN_dom"/>
</dbReference>
<dbReference type="InterPro" id="IPR003130">
    <property type="entry name" value="GED"/>
</dbReference>
<dbReference type="InterPro" id="IPR020850">
    <property type="entry name" value="GED_dom"/>
</dbReference>
<dbReference type="InterPro" id="IPR027417">
    <property type="entry name" value="P-loop_NTPase"/>
</dbReference>
<dbReference type="PANTHER" id="PTHR11566">
    <property type="entry name" value="DYNAMIN"/>
    <property type="match status" value="1"/>
</dbReference>
<dbReference type="PANTHER" id="PTHR11566:SF21">
    <property type="entry name" value="DYNAMIN RELATED PROTEIN 1, ISOFORM A"/>
    <property type="match status" value="1"/>
</dbReference>
<dbReference type="Pfam" id="PF01031">
    <property type="entry name" value="Dynamin_M"/>
    <property type="match status" value="1"/>
</dbReference>
<dbReference type="Pfam" id="PF00350">
    <property type="entry name" value="Dynamin_N"/>
    <property type="match status" value="1"/>
</dbReference>
<dbReference type="Pfam" id="PF02212">
    <property type="entry name" value="GED"/>
    <property type="match status" value="1"/>
</dbReference>
<dbReference type="PRINTS" id="PR00195">
    <property type="entry name" value="DYNAMIN"/>
</dbReference>
<dbReference type="SMART" id="SM00053">
    <property type="entry name" value="DYNc"/>
    <property type="match status" value="1"/>
</dbReference>
<dbReference type="SMART" id="SM00302">
    <property type="entry name" value="GED"/>
    <property type="match status" value="1"/>
</dbReference>
<dbReference type="SUPFAM" id="SSF52540">
    <property type="entry name" value="P-loop containing nucleoside triphosphate hydrolases"/>
    <property type="match status" value="1"/>
</dbReference>
<dbReference type="PROSITE" id="PS00410">
    <property type="entry name" value="G_DYNAMIN_1"/>
    <property type="match status" value="1"/>
</dbReference>
<dbReference type="PROSITE" id="PS51718">
    <property type="entry name" value="G_DYNAMIN_2"/>
    <property type="match status" value="1"/>
</dbReference>
<dbReference type="PROSITE" id="PS51388">
    <property type="entry name" value="GED"/>
    <property type="match status" value="1"/>
</dbReference>